<feature type="chain" id="PRO_0000085798" description="Cyclin-dependent kinase 8">
    <location>
        <begin position="1"/>
        <end position="454"/>
    </location>
</feature>
<feature type="domain" description="Protein kinase" evidence="2">
    <location>
        <begin position="21"/>
        <end position="335"/>
    </location>
</feature>
<feature type="region of interest" description="Disordered" evidence="4">
    <location>
        <begin position="342"/>
        <end position="454"/>
    </location>
</feature>
<feature type="compositionally biased region" description="Low complexity" evidence="4">
    <location>
        <begin position="373"/>
        <end position="400"/>
    </location>
</feature>
<feature type="compositionally biased region" description="Low complexity" evidence="4">
    <location>
        <begin position="424"/>
        <end position="454"/>
    </location>
</feature>
<feature type="active site" description="Proton acceptor" evidence="2 3">
    <location>
        <position position="151"/>
    </location>
</feature>
<feature type="binding site" evidence="1 2">
    <location>
        <begin position="27"/>
        <end position="35"/>
    </location>
    <ligand>
        <name>ATP</name>
        <dbReference type="ChEBI" id="CHEBI:30616"/>
    </ligand>
</feature>
<feature type="binding site" evidence="1 2">
    <location>
        <position position="52"/>
    </location>
    <ligand>
        <name>ATP</name>
        <dbReference type="ChEBI" id="CHEBI:30616"/>
    </ligand>
</feature>
<feature type="sequence conflict" description="In Ref. 1; AAB38385." evidence="10" ref="1">
    <original>T</original>
    <variation>A</variation>
    <location>
        <position position="9"/>
    </location>
</feature>
<feature type="sequence conflict" description="In Ref. 1; AAB38385." evidence="10" ref="1">
    <original>K</original>
    <variation>N</variation>
    <location>
        <position position="15"/>
    </location>
</feature>
<feature type="sequence conflict" description="In Ref. 1; AAB38385." evidence="10" ref="1">
    <original>K</original>
    <variation>R</variation>
    <location>
        <position position="37"/>
    </location>
</feature>
<feature type="sequence conflict" description="In Ref. 1; AAB38385." evidence="10" ref="1">
    <original>W</original>
    <variation>R</variation>
    <location>
        <position position="40"/>
    </location>
</feature>
<feature type="sequence conflict" description="In Ref. 1; AAB38385." evidence="10" ref="1">
    <original>L</original>
    <variation>W</variation>
    <location>
        <position position="70"/>
    </location>
</feature>
<feature type="sequence conflict" description="In Ref. 4; AAM50971." evidence="10" ref="4">
    <original>K</original>
    <variation>R</variation>
    <location>
        <position position="185"/>
    </location>
</feature>
<feature type="sequence conflict" description="In Ref. 1; AAB38385." evidence="10" ref="1">
    <original>N</original>
    <variation>I</variation>
    <location>
        <position position="321"/>
    </location>
</feature>
<feature type="sequence conflict" description="In Ref. 1; AAB38385." evidence="10" ref="1">
    <original>Q</original>
    <variation>R</variation>
    <location>
        <position position="336"/>
    </location>
</feature>
<proteinExistence type="evidence at protein level"/>
<keyword id="KW-0010">Activator</keyword>
<keyword id="KW-0067">ATP-binding</keyword>
<keyword id="KW-0418">Kinase</keyword>
<keyword id="KW-0547">Nucleotide-binding</keyword>
<keyword id="KW-0539">Nucleus</keyword>
<keyword id="KW-0597">Phosphoprotein</keyword>
<keyword id="KW-1185">Reference proteome</keyword>
<keyword id="KW-0678">Repressor</keyword>
<keyword id="KW-0723">Serine/threonine-protein kinase</keyword>
<keyword id="KW-0804">Transcription</keyword>
<keyword id="KW-0805">Transcription regulation</keyword>
<keyword id="KW-0808">Transferase</keyword>
<dbReference type="EC" id="2.7.11.22"/>
<dbReference type="EC" id="2.7.11.23"/>
<dbReference type="EMBL" id="U33015">
    <property type="protein sequence ID" value="AAB38385.1"/>
    <property type="molecule type" value="mRNA"/>
</dbReference>
<dbReference type="EMBL" id="AE014296">
    <property type="protein sequence ID" value="AAF50197.2"/>
    <property type="molecule type" value="Genomic_DNA"/>
</dbReference>
<dbReference type="EMBL" id="AY119111">
    <property type="protein sequence ID" value="AAM50971.1"/>
    <property type="molecule type" value="mRNA"/>
</dbReference>
<dbReference type="RefSeq" id="NP_536735.2">
    <property type="nucleotide sequence ID" value="NM_080487.4"/>
</dbReference>
<dbReference type="SMR" id="Q9VT57"/>
<dbReference type="BioGRID" id="64544">
    <property type="interactions" value="50"/>
</dbReference>
<dbReference type="ComplexPortal" id="CPX-7701">
    <property type="entry name" value="CKM complex"/>
</dbReference>
<dbReference type="DIP" id="DIP-38574N"/>
<dbReference type="FunCoup" id="Q9VT57">
    <property type="interactions" value="2351"/>
</dbReference>
<dbReference type="IntAct" id="Q9VT57">
    <property type="interactions" value="52"/>
</dbReference>
<dbReference type="MINT" id="Q9VT57"/>
<dbReference type="STRING" id="7227.FBpp0076098"/>
<dbReference type="PaxDb" id="7227-FBpp0076098"/>
<dbReference type="EnsemblMetazoa" id="FBtr0076369">
    <property type="protein sequence ID" value="FBpp0076098"/>
    <property type="gene ID" value="FBgn0015618"/>
</dbReference>
<dbReference type="GeneID" id="39157"/>
<dbReference type="KEGG" id="dme:Dmel_CG10572"/>
<dbReference type="AGR" id="FB:FBgn0015618"/>
<dbReference type="CTD" id="1024"/>
<dbReference type="FlyBase" id="FBgn0015618">
    <property type="gene designation" value="Cdk8"/>
</dbReference>
<dbReference type="VEuPathDB" id="VectorBase:FBgn0015618"/>
<dbReference type="eggNOG" id="KOG0666">
    <property type="taxonomic scope" value="Eukaryota"/>
</dbReference>
<dbReference type="GeneTree" id="ENSGT00940000158213"/>
<dbReference type="HOGENOM" id="CLU_000288_181_6_1"/>
<dbReference type="InParanoid" id="Q9VT57"/>
<dbReference type="OMA" id="SEMPRMD"/>
<dbReference type="OrthoDB" id="6284126at2759"/>
<dbReference type="PhylomeDB" id="Q9VT57"/>
<dbReference type="BRENDA" id="2.7.11.23">
    <property type="organism ID" value="1994"/>
</dbReference>
<dbReference type="Reactome" id="R-DME-2173796">
    <property type="pathway name" value="SMAD2/SMAD3:SMAD4 heterotrimer regulates transcription"/>
</dbReference>
<dbReference type="Reactome" id="R-DME-9841922">
    <property type="pathway name" value="MLL4 and MLL3 complexes regulate expression of PPARG target genes in adipogenesis and hepatic steatosis"/>
</dbReference>
<dbReference type="SignaLink" id="Q9VT57"/>
<dbReference type="BioGRID-ORCS" id="39157">
    <property type="hits" value="0 hits in 3 CRISPR screens"/>
</dbReference>
<dbReference type="GenomeRNAi" id="39157"/>
<dbReference type="PRO" id="PR:Q9VT57"/>
<dbReference type="Proteomes" id="UP000000803">
    <property type="component" value="Chromosome 3L"/>
</dbReference>
<dbReference type="Bgee" id="FBgn0015618">
    <property type="expression patterns" value="Expressed in T neuron T5a (Drosophila) in embryonic/larval optic lobe (Drosophila) and 32 other cell types or tissues"/>
</dbReference>
<dbReference type="ExpressionAtlas" id="Q9VT57">
    <property type="expression patterns" value="baseline and differential"/>
</dbReference>
<dbReference type="GO" id="GO:1990508">
    <property type="term" value="C:CKM complex"/>
    <property type="evidence" value="ECO:0000314"/>
    <property type="project" value="FlyBase"/>
</dbReference>
<dbReference type="GO" id="GO:0016592">
    <property type="term" value="C:mediator complex"/>
    <property type="evidence" value="ECO:0000314"/>
    <property type="project" value="FlyBase"/>
</dbReference>
<dbReference type="GO" id="GO:0005634">
    <property type="term" value="C:nucleus"/>
    <property type="evidence" value="ECO:0000314"/>
    <property type="project" value="UniProtKB"/>
</dbReference>
<dbReference type="GO" id="GO:0005524">
    <property type="term" value="F:ATP binding"/>
    <property type="evidence" value="ECO:0007669"/>
    <property type="project" value="UniProtKB-KW"/>
</dbReference>
<dbReference type="GO" id="GO:0004693">
    <property type="term" value="F:cyclin-dependent protein serine/threonine kinase activity"/>
    <property type="evidence" value="ECO:0000250"/>
    <property type="project" value="FlyBase"/>
</dbReference>
<dbReference type="GO" id="GO:0106310">
    <property type="term" value="F:protein serine kinase activity"/>
    <property type="evidence" value="ECO:0007669"/>
    <property type="project" value="RHEA"/>
</dbReference>
<dbReference type="GO" id="GO:0004674">
    <property type="term" value="F:protein serine/threonine kinase activity"/>
    <property type="evidence" value="ECO:0000314"/>
    <property type="project" value="FlyBase"/>
</dbReference>
<dbReference type="GO" id="GO:0008353">
    <property type="term" value="F:RNA polymerase II CTD heptapeptide repeat kinase activity"/>
    <property type="evidence" value="ECO:0007669"/>
    <property type="project" value="UniProtKB-EC"/>
</dbReference>
<dbReference type="GO" id="GO:0022416">
    <property type="term" value="P:chaeta development"/>
    <property type="evidence" value="ECO:0000315"/>
    <property type="project" value="FlyBase"/>
</dbReference>
<dbReference type="GO" id="GO:0000082">
    <property type="term" value="P:G1/S transition of mitotic cell cycle"/>
    <property type="evidence" value="ECO:0000315"/>
    <property type="project" value="UniProtKB"/>
</dbReference>
<dbReference type="GO" id="GO:0036011">
    <property type="term" value="P:imaginal disc-derived leg segmentation"/>
    <property type="evidence" value="ECO:0000315"/>
    <property type="project" value="FlyBase"/>
</dbReference>
<dbReference type="GO" id="GO:0006468">
    <property type="term" value="P:protein phosphorylation"/>
    <property type="evidence" value="ECO:0000314"/>
    <property type="project" value="UniProtKB"/>
</dbReference>
<dbReference type="GO" id="GO:0045498">
    <property type="term" value="P:sex comb development"/>
    <property type="evidence" value="ECO:0000315"/>
    <property type="project" value="FlyBase"/>
</dbReference>
<dbReference type="GO" id="GO:0034472">
    <property type="term" value="P:snRNA 3'-end processing"/>
    <property type="evidence" value="ECO:0000314"/>
    <property type="project" value="FlyBase"/>
</dbReference>
<dbReference type="CDD" id="cd07842">
    <property type="entry name" value="STKc_CDK8_like"/>
    <property type="match status" value="1"/>
</dbReference>
<dbReference type="FunFam" id="1.10.510.10:FF:000088">
    <property type="entry name" value="cyclin-dependent kinase 8 isoform X1"/>
    <property type="match status" value="1"/>
</dbReference>
<dbReference type="FunFam" id="3.30.200.20:FF:000122">
    <property type="entry name" value="cyclin-dependent kinase 8 isoform X1"/>
    <property type="match status" value="1"/>
</dbReference>
<dbReference type="Gene3D" id="3.30.200.20">
    <property type="entry name" value="Phosphorylase Kinase, domain 1"/>
    <property type="match status" value="1"/>
</dbReference>
<dbReference type="Gene3D" id="1.10.510.10">
    <property type="entry name" value="Transferase(Phosphotransferase) domain 1"/>
    <property type="match status" value="1"/>
</dbReference>
<dbReference type="InterPro" id="IPR050108">
    <property type="entry name" value="CDK"/>
</dbReference>
<dbReference type="InterPro" id="IPR011009">
    <property type="entry name" value="Kinase-like_dom_sf"/>
</dbReference>
<dbReference type="InterPro" id="IPR000719">
    <property type="entry name" value="Prot_kinase_dom"/>
</dbReference>
<dbReference type="InterPro" id="IPR017441">
    <property type="entry name" value="Protein_kinase_ATP_BS"/>
</dbReference>
<dbReference type="InterPro" id="IPR008271">
    <property type="entry name" value="Ser/Thr_kinase_AS"/>
</dbReference>
<dbReference type="PANTHER" id="PTHR24056">
    <property type="entry name" value="CELL DIVISION PROTEIN KINASE"/>
    <property type="match status" value="1"/>
</dbReference>
<dbReference type="PANTHER" id="PTHR24056:SF495">
    <property type="entry name" value="CYCLIN-DEPENDENT KINASE 8-RELATED"/>
    <property type="match status" value="1"/>
</dbReference>
<dbReference type="Pfam" id="PF00069">
    <property type="entry name" value="Pkinase"/>
    <property type="match status" value="1"/>
</dbReference>
<dbReference type="SMART" id="SM00220">
    <property type="entry name" value="S_TKc"/>
    <property type="match status" value="1"/>
</dbReference>
<dbReference type="SUPFAM" id="SSF56112">
    <property type="entry name" value="Protein kinase-like (PK-like)"/>
    <property type="match status" value="1"/>
</dbReference>
<dbReference type="PROSITE" id="PS00107">
    <property type="entry name" value="PROTEIN_KINASE_ATP"/>
    <property type="match status" value="1"/>
</dbReference>
<dbReference type="PROSITE" id="PS50011">
    <property type="entry name" value="PROTEIN_KINASE_DOM"/>
    <property type="match status" value="1"/>
</dbReference>
<dbReference type="PROSITE" id="PS00108">
    <property type="entry name" value="PROTEIN_KINASE_ST"/>
    <property type="match status" value="1"/>
</dbReference>
<organism evidence="11">
    <name type="scientific">Drosophila melanogaster</name>
    <name type="common">Fruit fly</name>
    <dbReference type="NCBI Taxonomy" id="7227"/>
    <lineage>
        <taxon>Eukaryota</taxon>
        <taxon>Metazoa</taxon>
        <taxon>Ecdysozoa</taxon>
        <taxon>Arthropoda</taxon>
        <taxon>Hexapoda</taxon>
        <taxon>Insecta</taxon>
        <taxon>Pterygota</taxon>
        <taxon>Neoptera</taxon>
        <taxon>Endopterygota</taxon>
        <taxon>Diptera</taxon>
        <taxon>Brachycera</taxon>
        <taxon>Muscomorpha</taxon>
        <taxon>Ephydroidea</taxon>
        <taxon>Drosophilidae</taxon>
        <taxon>Drosophila</taxon>
        <taxon>Sophophora</taxon>
    </lineage>
</organism>
<evidence type="ECO:0000250" key="1">
    <source>
        <dbReference type="UniProtKB" id="P49336"/>
    </source>
</evidence>
<evidence type="ECO:0000255" key="2">
    <source>
        <dbReference type="PROSITE-ProRule" id="PRU00159"/>
    </source>
</evidence>
<evidence type="ECO:0000255" key="3">
    <source>
        <dbReference type="PROSITE-ProRule" id="PRU10027"/>
    </source>
</evidence>
<evidence type="ECO:0000256" key="4">
    <source>
        <dbReference type="SAM" id="MobiDB-lite"/>
    </source>
</evidence>
<evidence type="ECO:0000269" key="5">
    <source>
    </source>
</evidence>
<evidence type="ECO:0000269" key="6">
    <source>
    </source>
</evidence>
<evidence type="ECO:0000269" key="7">
    <source>
    </source>
</evidence>
<evidence type="ECO:0000269" key="8">
    <source>
    </source>
</evidence>
<evidence type="ECO:0000303" key="9">
    <source>
    </source>
</evidence>
<evidence type="ECO:0000305" key="10"/>
<evidence type="ECO:0000312" key="11">
    <source>
        <dbReference type="EMBL" id="AAF50197.2"/>
    </source>
</evidence>
<comment type="function">
    <text evidence="7 8">Component of the Mediator complex, a coactivator involved in regulated gene transcription of nearly all RNA polymerase II-dependent genes. Mediator functions as a bridge to convey information from gene-specific regulatory proteins to the basal RNA polymerase II transcription machinery. Mediator is recruited to promoters by direct interactions with regulatory proteins and serves as a scaffold for the assembly of a functional pre-initiation complex with RNA polymerase II and the general transcription factors. May phosphorylate the CTD (C-terminal domain) of the large subunit of RNA polymerase II (RNAp II), which may inhibit the formation of a transcription initiation complex. Required for leg and eye development and macrochaete specification or differentiation.</text>
</comment>
<comment type="catalytic activity">
    <reaction evidence="1 9">
        <text>L-seryl-[protein] + ATP = O-phospho-L-seryl-[protein] + ADP + H(+)</text>
        <dbReference type="Rhea" id="RHEA:17989"/>
        <dbReference type="Rhea" id="RHEA-COMP:9863"/>
        <dbReference type="Rhea" id="RHEA-COMP:11604"/>
        <dbReference type="ChEBI" id="CHEBI:15378"/>
        <dbReference type="ChEBI" id="CHEBI:29999"/>
        <dbReference type="ChEBI" id="CHEBI:30616"/>
        <dbReference type="ChEBI" id="CHEBI:83421"/>
        <dbReference type="ChEBI" id="CHEBI:456216"/>
        <dbReference type="EC" id="2.7.11.22"/>
    </reaction>
</comment>
<comment type="catalytic activity">
    <reaction evidence="1 9">
        <text>L-threonyl-[protein] + ATP = O-phospho-L-threonyl-[protein] + ADP + H(+)</text>
        <dbReference type="Rhea" id="RHEA:46608"/>
        <dbReference type="Rhea" id="RHEA-COMP:11060"/>
        <dbReference type="Rhea" id="RHEA-COMP:11605"/>
        <dbReference type="ChEBI" id="CHEBI:15378"/>
        <dbReference type="ChEBI" id="CHEBI:30013"/>
        <dbReference type="ChEBI" id="CHEBI:30616"/>
        <dbReference type="ChEBI" id="CHEBI:61977"/>
        <dbReference type="ChEBI" id="CHEBI:456216"/>
        <dbReference type="EC" id="2.7.11.22"/>
    </reaction>
</comment>
<comment type="catalytic activity">
    <reaction>
        <text>[DNA-directed RNA polymerase] + ATP = phospho-[DNA-directed RNA polymerase] + ADP + H(+)</text>
        <dbReference type="Rhea" id="RHEA:10216"/>
        <dbReference type="Rhea" id="RHEA-COMP:11321"/>
        <dbReference type="Rhea" id="RHEA-COMP:11322"/>
        <dbReference type="ChEBI" id="CHEBI:15378"/>
        <dbReference type="ChEBI" id="CHEBI:30616"/>
        <dbReference type="ChEBI" id="CHEBI:43176"/>
        <dbReference type="ChEBI" id="CHEBI:68546"/>
        <dbReference type="ChEBI" id="CHEBI:456216"/>
        <dbReference type="EC" id="2.7.11.23"/>
    </reaction>
</comment>
<comment type="cofactor">
    <cofactor evidence="1">
        <name>Mg(2+)</name>
        <dbReference type="ChEBI" id="CHEBI:18420"/>
    </cofactor>
</comment>
<comment type="subunit">
    <text>Component of the Cdk8 module of the Mediator complex, composed of CycC, Cdk8, kto and skd.</text>
</comment>
<comment type="interaction">
    <interactant intactId="EBI-163640">
        <id>Q9VT57</id>
    </interactant>
    <interactant intactId="EBI-195485">
        <id>P25008</id>
        <label>CycC</label>
    </interactant>
    <organismsDiffer>false</organismsDiffer>
    <experiments>2</experiments>
</comment>
<comment type="interaction">
    <interactant intactId="EBI-163640">
        <id>Q9VT57</id>
    </interactant>
    <interactant intactId="EBI-108384">
        <id>Q27368</id>
        <label>E2f1</label>
    </interactant>
    <organismsDiffer>false</organismsDiffer>
    <experiments>2</experiments>
</comment>
<comment type="interaction">
    <interactant intactId="EBI-163640">
        <id>Q9VT57</id>
    </interactant>
    <interactant intactId="EBI-139710">
        <id>Q9VW47</id>
        <label>kto</label>
    </interactant>
    <organismsDiffer>false</organismsDiffer>
    <experiments>2</experiments>
</comment>
<comment type="interaction">
    <interactant intactId="EBI-163640">
        <id>Q9VT57</id>
    </interactant>
    <interactant intactId="EBI-110730">
        <id>Q7KTX8</id>
        <label>skd</label>
    </interactant>
    <organismsDiffer>false</organismsDiffer>
    <experiments>2</experiments>
</comment>
<comment type="subcellular location">
    <subcellularLocation>
        <location evidence="8">Nucleus</location>
    </subcellularLocation>
</comment>
<comment type="developmental stage">
    <text evidence="8">Expressed both maternally and zygotically during developmental periods of maximal cell division; most abundant in early embryos and low levels in larvae, pupae and adults.</text>
</comment>
<comment type="similarity">
    <text evidence="10">Belongs to the protein kinase superfamily. CMGC Ser/Thr protein kinase family. CDC2/CDKX subfamily.</text>
</comment>
<protein>
    <recommendedName>
        <fullName>Cyclin-dependent kinase 8</fullName>
        <ecNumber>2.7.11.22</ecNumber>
        <ecNumber>2.7.11.23</ecNumber>
    </recommendedName>
    <alternativeName>
        <fullName>Cell division protein kinase 8</fullName>
        <shortName>DmCdk8</shortName>
    </alternativeName>
    <alternativeName>
        <fullName>Mediator complex subunit Cdk8</fullName>
    </alternativeName>
    <alternativeName>
        <fullName>Mediator of RNA polymerase II transcription subunit Cdk8</fullName>
    </alternativeName>
</protein>
<name>CDK8_DROME</name>
<sequence length="454" mass="53682">MDYDFKMKTQIERTKVEDLFNYEGCKVGRGTYGHVYKAKWKETSDGKEYALKQIDGTGLSMSACREIALLRELKHQNVITLIRVFLSHNDRKVFLLIDYAEHDLWHIIKFHRAAKATKKQVVVPRGMVKSLLYQILDGIHYLHSNWVLHRDLKPANILVMGDGNERGRVKIADMGFARLFNAPLKPLADLDPVVVTFWYRAPELLLGARHYTKAIDIWAIGCIFAELLTSEPIFHCRQEDIKTSNPYHHDQLDRIFNVMGFPQDKDWEDIKKMPEHHTLTKDFKRSTYSTCSLAKYMERHKIKPDSKAFHLLQKLLLMDPNKRITSEQAMQDQYFQEEPQPTQDVFAGCPIPYPKREFLTDDDQEDKSDNKRQQQQQQQQQQQQQQQQQQQQQQQQQQQQMNAEPNAKRVRLSGAGNQQDFHHQQQQQQQQQQQQQQQQQQMMFNQQQNFQRFN</sequence>
<reference evidence="10" key="1">
    <citation type="journal article" date="1996" name="Mol. Biol. Cell">
        <title>Drosophila Cdk8, a kinase partner of cyclin C that interacts with the large subunit of RNA polymerase II.</title>
        <authorList>
            <person name="Leclerc V."/>
            <person name="Tassan J.-P."/>
            <person name="O'Farrell P.H."/>
            <person name="Nigg E.A."/>
            <person name="Leopold P."/>
        </authorList>
    </citation>
    <scope>NUCLEOTIDE SEQUENCE [MRNA]</scope>
    <scope>FUNCTION</scope>
    <scope>INTERACTION</scope>
    <scope>SUBCELLULAR LOCATION</scope>
    <scope>DEVELOPMENTAL STAGE</scope>
    <source>
        <tissue evidence="8">Embryo</tissue>
    </source>
</reference>
<reference evidence="10" key="2">
    <citation type="journal article" date="2000" name="Science">
        <title>The genome sequence of Drosophila melanogaster.</title>
        <authorList>
            <person name="Adams M.D."/>
            <person name="Celniker S.E."/>
            <person name="Holt R.A."/>
            <person name="Evans C.A."/>
            <person name="Gocayne J.D."/>
            <person name="Amanatides P.G."/>
            <person name="Scherer S.E."/>
            <person name="Li P.W."/>
            <person name="Hoskins R.A."/>
            <person name="Galle R.F."/>
            <person name="George R.A."/>
            <person name="Lewis S.E."/>
            <person name="Richards S."/>
            <person name="Ashburner M."/>
            <person name="Henderson S.N."/>
            <person name="Sutton G.G."/>
            <person name="Wortman J.R."/>
            <person name="Yandell M.D."/>
            <person name="Zhang Q."/>
            <person name="Chen L.X."/>
            <person name="Brandon R.C."/>
            <person name="Rogers Y.-H.C."/>
            <person name="Blazej R.G."/>
            <person name="Champe M."/>
            <person name="Pfeiffer B.D."/>
            <person name="Wan K.H."/>
            <person name="Doyle C."/>
            <person name="Baxter E.G."/>
            <person name="Helt G."/>
            <person name="Nelson C.R."/>
            <person name="Miklos G.L.G."/>
            <person name="Abril J.F."/>
            <person name="Agbayani A."/>
            <person name="An H.-J."/>
            <person name="Andrews-Pfannkoch C."/>
            <person name="Baldwin D."/>
            <person name="Ballew R.M."/>
            <person name="Basu A."/>
            <person name="Baxendale J."/>
            <person name="Bayraktaroglu L."/>
            <person name="Beasley E.M."/>
            <person name="Beeson K.Y."/>
            <person name="Benos P.V."/>
            <person name="Berman B.P."/>
            <person name="Bhandari D."/>
            <person name="Bolshakov S."/>
            <person name="Borkova D."/>
            <person name="Botchan M.R."/>
            <person name="Bouck J."/>
            <person name="Brokstein P."/>
            <person name="Brottier P."/>
            <person name="Burtis K.C."/>
            <person name="Busam D.A."/>
            <person name="Butler H."/>
            <person name="Cadieu E."/>
            <person name="Center A."/>
            <person name="Chandra I."/>
            <person name="Cherry J.M."/>
            <person name="Cawley S."/>
            <person name="Dahlke C."/>
            <person name="Davenport L.B."/>
            <person name="Davies P."/>
            <person name="de Pablos B."/>
            <person name="Delcher A."/>
            <person name="Deng Z."/>
            <person name="Mays A.D."/>
            <person name="Dew I."/>
            <person name="Dietz S.M."/>
            <person name="Dodson K."/>
            <person name="Doup L.E."/>
            <person name="Downes M."/>
            <person name="Dugan-Rocha S."/>
            <person name="Dunkov B.C."/>
            <person name="Dunn P."/>
            <person name="Durbin K.J."/>
            <person name="Evangelista C.C."/>
            <person name="Ferraz C."/>
            <person name="Ferriera S."/>
            <person name="Fleischmann W."/>
            <person name="Fosler C."/>
            <person name="Gabrielian A.E."/>
            <person name="Garg N.S."/>
            <person name="Gelbart W.M."/>
            <person name="Glasser K."/>
            <person name="Glodek A."/>
            <person name="Gong F."/>
            <person name="Gorrell J.H."/>
            <person name="Gu Z."/>
            <person name="Guan P."/>
            <person name="Harris M."/>
            <person name="Harris N.L."/>
            <person name="Harvey D.A."/>
            <person name="Heiman T.J."/>
            <person name="Hernandez J.R."/>
            <person name="Houck J."/>
            <person name="Hostin D."/>
            <person name="Houston K.A."/>
            <person name="Howland T.J."/>
            <person name="Wei M.-H."/>
            <person name="Ibegwam C."/>
            <person name="Jalali M."/>
            <person name="Kalush F."/>
            <person name="Karpen G.H."/>
            <person name="Ke Z."/>
            <person name="Kennison J.A."/>
            <person name="Ketchum K.A."/>
            <person name="Kimmel B.E."/>
            <person name="Kodira C.D."/>
            <person name="Kraft C.L."/>
            <person name="Kravitz S."/>
            <person name="Kulp D."/>
            <person name="Lai Z."/>
            <person name="Lasko P."/>
            <person name="Lei Y."/>
            <person name="Levitsky A.A."/>
            <person name="Li J.H."/>
            <person name="Li Z."/>
            <person name="Liang Y."/>
            <person name="Lin X."/>
            <person name="Liu X."/>
            <person name="Mattei B."/>
            <person name="McIntosh T.C."/>
            <person name="McLeod M.P."/>
            <person name="McPherson D."/>
            <person name="Merkulov G."/>
            <person name="Milshina N.V."/>
            <person name="Mobarry C."/>
            <person name="Morris J."/>
            <person name="Moshrefi A."/>
            <person name="Mount S.M."/>
            <person name="Moy M."/>
            <person name="Murphy B."/>
            <person name="Murphy L."/>
            <person name="Muzny D.M."/>
            <person name="Nelson D.L."/>
            <person name="Nelson D.R."/>
            <person name="Nelson K.A."/>
            <person name="Nixon K."/>
            <person name="Nusskern D.R."/>
            <person name="Pacleb J.M."/>
            <person name="Palazzolo M."/>
            <person name="Pittman G.S."/>
            <person name="Pan S."/>
            <person name="Pollard J."/>
            <person name="Puri V."/>
            <person name="Reese M.G."/>
            <person name="Reinert K."/>
            <person name="Remington K."/>
            <person name="Saunders R.D.C."/>
            <person name="Scheeler F."/>
            <person name="Shen H."/>
            <person name="Shue B.C."/>
            <person name="Siden-Kiamos I."/>
            <person name="Simpson M."/>
            <person name="Skupski M.P."/>
            <person name="Smith T.J."/>
            <person name="Spier E."/>
            <person name="Spradling A.C."/>
            <person name="Stapleton M."/>
            <person name="Strong R."/>
            <person name="Sun E."/>
            <person name="Svirskas R."/>
            <person name="Tector C."/>
            <person name="Turner R."/>
            <person name="Venter E."/>
            <person name="Wang A.H."/>
            <person name="Wang X."/>
            <person name="Wang Z.-Y."/>
            <person name="Wassarman D.A."/>
            <person name="Weinstock G.M."/>
            <person name="Weissenbach J."/>
            <person name="Williams S.M."/>
            <person name="Woodage T."/>
            <person name="Worley K.C."/>
            <person name="Wu D."/>
            <person name="Yang S."/>
            <person name="Yao Q.A."/>
            <person name="Ye J."/>
            <person name="Yeh R.-F."/>
            <person name="Zaveri J.S."/>
            <person name="Zhan M."/>
            <person name="Zhang G."/>
            <person name="Zhao Q."/>
            <person name="Zheng L."/>
            <person name="Zheng X.H."/>
            <person name="Zhong F.N."/>
            <person name="Zhong W."/>
            <person name="Zhou X."/>
            <person name="Zhu S.C."/>
            <person name="Zhu X."/>
            <person name="Smith H.O."/>
            <person name="Gibbs R.A."/>
            <person name="Myers E.W."/>
            <person name="Rubin G.M."/>
            <person name="Venter J.C."/>
        </authorList>
    </citation>
    <scope>NUCLEOTIDE SEQUENCE [LARGE SCALE GENOMIC DNA]</scope>
    <source>
        <strain evidence="5">Berkeley</strain>
    </source>
</reference>
<reference evidence="10" key="3">
    <citation type="journal article" date="2002" name="Genome Biol.">
        <title>Annotation of the Drosophila melanogaster euchromatic genome: a systematic review.</title>
        <authorList>
            <person name="Misra S."/>
            <person name="Crosby M.A."/>
            <person name="Mungall C.J."/>
            <person name="Matthews B.B."/>
            <person name="Campbell K.S."/>
            <person name="Hradecky P."/>
            <person name="Huang Y."/>
            <person name="Kaminker J.S."/>
            <person name="Millburn G.H."/>
            <person name="Prochnik S.E."/>
            <person name="Smith C.D."/>
            <person name="Tupy J.L."/>
            <person name="Whitfield E.J."/>
            <person name="Bayraktaroglu L."/>
            <person name="Berman B.P."/>
            <person name="Bettencourt B.R."/>
            <person name="Celniker S.E."/>
            <person name="de Grey A.D.N.J."/>
            <person name="Drysdale R.A."/>
            <person name="Harris N.L."/>
            <person name="Richter J."/>
            <person name="Russo S."/>
            <person name="Schroeder A.J."/>
            <person name="Shu S.Q."/>
            <person name="Stapleton M."/>
            <person name="Yamada C."/>
            <person name="Ashburner M."/>
            <person name="Gelbart W.M."/>
            <person name="Rubin G.M."/>
            <person name="Lewis S.E."/>
        </authorList>
    </citation>
    <scope>GENOME REANNOTATION</scope>
    <source>
        <strain>Berkeley</strain>
    </source>
</reference>
<reference evidence="10" key="4">
    <citation type="journal article" date="2002" name="Genome Biol.">
        <title>A Drosophila full-length cDNA resource.</title>
        <authorList>
            <person name="Stapleton M."/>
            <person name="Carlson J.W."/>
            <person name="Brokstein P."/>
            <person name="Yu C."/>
            <person name="Champe M."/>
            <person name="George R.A."/>
            <person name="Guarin H."/>
            <person name="Kronmiller B."/>
            <person name="Pacleb J.M."/>
            <person name="Park S."/>
            <person name="Wan K.H."/>
            <person name="Rubin G.M."/>
            <person name="Celniker S.E."/>
        </authorList>
    </citation>
    <scope>NUCLEOTIDE SEQUENCE [LARGE SCALE MRNA]</scope>
    <source>
        <strain evidence="6">Berkeley</strain>
        <tissue evidence="6">Embryo</tissue>
    </source>
</reference>
<reference key="5">
    <citation type="journal article" date="2007" name="EMBO J.">
        <title>Distinct roles for Mediator Cdk8 module subunits in Drosophila development.</title>
        <authorList>
            <person name="Loncle N."/>
            <person name="Boube M."/>
            <person name="Joulia L."/>
            <person name="Boschiero C."/>
            <person name="Werner M."/>
            <person name="Cribbs D.L."/>
            <person name="Bourbon H.-M."/>
        </authorList>
    </citation>
    <scope>FUNCTION</scope>
    <scope>INTERACTION WITH CYCC; KTO AND SKD</scope>
</reference>
<accession>Q9VT57</accession>
<accession>P91642</accession>
<accession>Q8MS41</accession>
<gene>
    <name type="primary">Cdk8</name>
    <name type="ORF">CG10572</name>
</gene>